<organism>
    <name type="scientific">Gallus gallus</name>
    <name type="common">Chicken</name>
    <dbReference type="NCBI Taxonomy" id="9031"/>
    <lineage>
        <taxon>Eukaryota</taxon>
        <taxon>Metazoa</taxon>
        <taxon>Chordata</taxon>
        <taxon>Craniata</taxon>
        <taxon>Vertebrata</taxon>
        <taxon>Euteleostomi</taxon>
        <taxon>Archelosauria</taxon>
        <taxon>Archosauria</taxon>
        <taxon>Dinosauria</taxon>
        <taxon>Saurischia</taxon>
        <taxon>Theropoda</taxon>
        <taxon>Coelurosauria</taxon>
        <taxon>Aves</taxon>
        <taxon>Neognathae</taxon>
        <taxon>Galloanserae</taxon>
        <taxon>Galliformes</taxon>
        <taxon>Phasianidae</taxon>
        <taxon>Phasianinae</taxon>
        <taxon>Gallus</taxon>
    </lineage>
</organism>
<reference key="1">
    <citation type="journal article" date="1993" name="J. Immunol.">
        <title>Identification of a G protein coupled receptor induced in activated T cells.</title>
        <authorList>
            <person name="Kaplan M.H."/>
            <person name="Smith D.I."/>
            <person name="Sundick R.S."/>
        </authorList>
    </citation>
    <scope>NUCLEOTIDE SEQUENCE [MRNA]</scope>
    <source>
        <tissue>T-cell</tissue>
    </source>
</reference>
<reference key="2">
    <citation type="journal article" date="1996" name="Biochem. Biophys. Res. Commun.">
        <title>Identification of 6H1 as a P2Y purinoceptor: P2Y5.</title>
        <authorList>
            <person name="Webb T.E."/>
            <person name="Kaplan M.G."/>
            <person name="Barnard E.A."/>
        </authorList>
    </citation>
    <scope>CHARACTERIZATION</scope>
</reference>
<evidence type="ECO:0000250" key="1"/>
<evidence type="ECO:0000255" key="2"/>
<evidence type="ECO:0000255" key="3">
    <source>
        <dbReference type="PROSITE-ProRule" id="PRU00521"/>
    </source>
</evidence>
<keyword id="KW-1003">Cell membrane</keyword>
<keyword id="KW-1015">Disulfide bond</keyword>
<keyword id="KW-0297">G-protein coupled receptor</keyword>
<keyword id="KW-0325">Glycoprotein</keyword>
<keyword id="KW-0449">Lipoprotein</keyword>
<keyword id="KW-0472">Membrane</keyword>
<keyword id="KW-0564">Palmitate</keyword>
<keyword id="KW-0675">Receptor</keyword>
<keyword id="KW-1185">Reference proteome</keyword>
<keyword id="KW-0807">Transducer</keyword>
<keyword id="KW-0812">Transmembrane</keyword>
<keyword id="KW-1133">Transmembrane helix</keyword>
<name>LPAR6_CHICK</name>
<dbReference type="EMBL" id="L06109">
    <property type="protein sequence ID" value="AAB06587.1"/>
    <property type="molecule type" value="mRNA"/>
</dbReference>
<dbReference type="PIR" id="I50241">
    <property type="entry name" value="I50241"/>
</dbReference>
<dbReference type="SMR" id="P32250"/>
<dbReference type="FunCoup" id="P32250">
    <property type="interactions" value="128"/>
</dbReference>
<dbReference type="GlyCosmos" id="P32250">
    <property type="glycosylation" value="1 site, No reported glycans"/>
</dbReference>
<dbReference type="GlyGen" id="P32250">
    <property type="glycosylation" value="1 site"/>
</dbReference>
<dbReference type="VEuPathDB" id="HostDB:geneid_396118"/>
<dbReference type="InParanoid" id="P32250"/>
<dbReference type="OrthoDB" id="5781782at2759"/>
<dbReference type="PhylomeDB" id="P32250"/>
<dbReference type="Proteomes" id="UP000000539">
    <property type="component" value="Unassembled WGS sequence"/>
</dbReference>
<dbReference type="GO" id="GO:0005886">
    <property type="term" value="C:plasma membrane"/>
    <property type="evidence" value="ECO:0000318"/>
    <property type="project" value="GO_Central"/>
</dbReference>
<dbReference type="GO" id="GO:0070915">
    <property type="term" value="F:lysophosphatidic acid receptor activity"/>
    <property type="evidence" value="ECO:0000318"/>
    <property type="project" value="GO_Central"/>
</dbReference>
<dbReference type="GO" id="GO:0007186">
    <property type="term" value="P:G protein-coupled receptor signaling pathway"/>
    <property type="evidence" value="ECO:0000318"/>
    <property type="project" value="GO_Central"/>
</dbReference>
<dbReference type="CDD" id="cd15156">
    <property type="entry name" value="7tmA_LPAR6_P2Y5"/>
    <property type="match status" value="1"/>
</dbReference>
<dbReference type="FunFam" id="1.20.1070.10:FF:000017">
    <property type="entry name" value="lysophosphatidic acid receptor 4"/>
    <property type="match status" value="1"/>
</dbReference>
<dbReference type="Gene3D" id="1.20.1070.10">
    <property type="entry name" value="Rhodopsin 7-helix transmembrane proteins"/>
    <property type="match status" value="1"/>
</dbReference>
<dbReference type="InterPro" id="IPR000276">
    <property type="entry name" value="GPCR_Rhodpsn"/>
</dbReference>
<dbReference type="InterPro" id="IPR017452">
    <property type="entry name" value="GPCR_Rhodpsn_7TM"/>
</dbReference>
<dbReference type="PANTHER" id="PTHR24232">
    <property type="entry name" value="G-PROTEIN COUPLED RECEPTOR"/>
    <property type="match status" value="1"/>
</dbReference>
<dbReference type="PANTHER" id="PTHR24232:SF3">
    <property type="entry name" value="LYSOPHOSPHATIDIC ACID RECEPTOR 6"/>
    <property type="match status" value="1"/>
</dbReference>
<dbReference type="Pfam" id="PF00001">
    <property type="entry name" value="7tm_1"/>
    <property type="match status" value="1"/>
</dbReference>
<dbReference type="PRINTS" id="PR00237">
    <property type="entry name" value="GPCRRHODOPSN"/>
</dbReference>
<dbReference type="PRINTS" id="PR01067">
    <property type="entry name" value="P2Y5ORPHANR"/>
</dbReference>
<dbReference type="SUPFAM" id="SSF81321">
    <property type="entry name" value="Family A G protein-coupled receptor-like"/>
    <property type="match status" value="1"/>
</dbReference>
<dbReference type="PROSITE" id="PS00237">
    <property type="entry name" value="G_PROTEIN_RECEP_F1_1"/>
    <property type="match status" value="1"/>
</dbReference>
<dbReference type="PROSITE" id="PS50262">
    <property type="entry name" value="G_PROTEIN_RECEP_F1_2"/>
    <property type="match status" value="1"/>
</dbReference>
<protein>
    <recommendedName>
        <fullName>Lysophosphatidic acid receptor 6</fullName>
        <shortName>LPA receptor 6</shortName>
        <shortName>LPA-6</shortName>
    </recommendedName>
    <alternativeName>
        <fullName>Oleoyl-L-alpha-lysophosphatidic acid receptor</fullName>
    </alternativeName>
    <alternativeName>
        <fullName>P2Y purinoceptor 5</fullName>
        <shortName>P2Y5</shortName>
    </alternativeName>
    <alternativeName>
        <fullName>Purinergic receptor 5</fullName>
    </alternativeName>
</protein>
<sequence>MVSSNCSTEDSFKYTLYGCVFSMVFVLGLIANCVAIYIFTFTLKVRNETTTYMLNLAISDLLFVFTLPFRIYYFVVRNWPFGDVLCKISVTLFYTNMYGSILFLTCISVDRFLAIVHPFRSKTLRTKRNARIVCVAVWITVLAGSTPASFFQSTNRQNNTEQRTCFENFPESTWKTYLSRIVIFIEIVGFFIPLILNVTCSTMVLRTLNKPLTLSRNKLSKKKVLKMIFVHLVIFCFCFVPYNITLILYSLMRTQTWINCSVVTAVRTMYPVTLCIAVSNCCFDPIVYYFTSDTNSELDKKQQVHQNT</sequence>
<feature type="chain" id="PRO_0000070027" description="Lysophosphatidic acid receptor 6">
    <location>
        <begin position="1"/>
        <end position="308"/>
    </location>
</feature>
<feature type="topological domain" description="Extracellular" evidence="2">
    <location>
        <begin position="1"/>
        <end position="16"/>
    </location>
</feature>
<feature type="transmembrane region" description="Helical; Name=1" evidence="2">
    <location>
        <begin position="17"/>
        <end position="43"/>
    </location>
</feature>
<feature type="topological domain" description="Cytoplasmic" evidence="2">
    <location>
        <begin position="44"/>
        <end position="52"/>
    </location>
</feature>
<feature type="transmembrane region" description="Helical; Name=2" evidence="2">
    <location>
        <begin position="53"/>
        <end position="76"/>
    </location>
</feature>
<feature type="topological domain" description="Extracellular" evidence="2">
    <location>
        <begin position="77"/>
        <end position="89"/>
    </location>
</feature>
<feature type="transmembrane region" description="Helical; Name=3" evidence="2">
    <location>
        <begin position="90"/>
        <end position="109"/>
    </location>
</feature>
<feature type="topological domain" description="Cytoplasmic" evidence="2">
    <location>
        <begin position="110"/>
        <end position="130"/>
    </location>
</feature>
<feature type="transmembrane region" description="Helical; Name=4" evidence="2">
    <location>
        <begin position="131"/>
        <end position="151"/>
    </location>
</feature>
<feature type="topological domain" description="Extracellular" evidence="2">
    <location>
        <begin position="152"/>
        <end position="178"/>
    </location>
</feature>
<feature type="transmembrane region" description="Helical; Name=5" evidence="2">
    <location>
        <begin position="179"/>
        <end position="206"/>
    </location>
</feature>
<feature type="topological domain" description="Cytoplasmic" evidence="2">
    <location>
        <begin position="207"/>
        <end position="224"/>
    </location>
</feature>
<feature type="transmembrane region" description="Helical; Name=6" evidence="2">
    <location>
        <begin position="225"/>
        <end position="250"/>
    </location>
</feature>
<feature type="topological domain" description="Extracellular" evidence="2">
    <location>
        <begin position="251"/>
        <end position="269"/>
    </location>
</feature>
<feature type="transmembrane region" description="Helical; Name=7" evidence="2">
    <location>
        <begin position="270"/>
        <end position="289"/>
    </location>
</feature>
<feature type="topological domain" description="Cytoplasmic" evidence="2">
    <location>
        <begin position="290"/>
        <end position="308"/>
    </location>
</feature>
<feature type="lipid moiety-binding region" description="S-palmitoyl cysteine" evidence="1">
    <location>
        <position position="281"/>
    </location>
</feature>
<feature type="glycosylation site" description="N-linked (GlcNAc...) asparagine" evidence="2">
    <location>
        <position position="5"/>
    </location>
</feature>
<feature type="disulfide bond" evidence="3">
    <location>
        <begin position="86"/>
        <end position="165"/>
    </location>
</feature>
<comment type="function">
    <text evidence="1">Binds to oleoyl-L-alpha-lysophosphatidic acid (LPA). Intracellular cAMP is involved in the receptor activation (By similarity).</text>
</comment>
<comment type="subcellular location">
    <subcellularLocation>
        <location>Cell membrane</location>
        <topology>Multi-pass membrane protein</topology>
    </subcellularLocation>
</comment>
<comment type="tissue specificity">
    <text>Induced in activated T-cells.</text>
</comment>
<comment type="similarity">
    <text evidence="3">Belongs to the G-protein coupled receptor 1 family.</text>
</comment>
<proteinExistence type="evidence at protein level"/>
<gene>
    <name type="primary">LPAR6</name>
    <name type="synonym">P2RY5</name>
</gene>
<accession>P32250</accession>